<comment type="cofactor">
    <cofactor evidence="1">
        <name>Zn(2+)</name>
        <dbReference type="ChEBI" id="CHEBI:29105"/>
    </cofactor>
    <text evidence="1">Binds 1 zinc ion per subunit.</text>
</comment>
<comment type="subunit">
    <text evidence="3">Component of the 40S small ribosomal subunit.</text>
</comment>
<comment type="subcellular location">
    <subcellularLocation>
        <location evidence="1">Cytoplasm</location>
        <location evidence="1">Cytosol</location>
    </subcellularLocation>
    <subcellularLocation>
        <location evidence="1">Cytoplasm</location>
    </subcellularLocation>
    <subcellularLocation>
        <location evidence="2">Rough endoplasmic reticulum</location>
    </subcellularLocation>
    <text evidence="1 2">Detected on cytosolic polysomes (By similarity). Detected in ribosomes that are associated with the rough endoplasmic reticulum (By similarity).</text>
</comment>
<comment type="similarity">
    <text evidence="5">Belongs to the universal ribosomal protein uS14 family.</text>
</comment>
<keyword id="KW-0963">Cytoplasm</keyword>
<keyword id="KW-0256">Endoplasmic reticulum</keyword>
<keyword id="KW-0479">Metal-binding</keyword>
<keyword id="KW-0687">Ribonucleoprotein</keyword>
<keyword id="KW-0689">Ribosomal protein</keyword>
<keyword id="KW-0862">Zinc</keyword>
<dbReference type="EMBL" id="AY829792">
    <property type="protein sequence ID" value="AAV91406.1"/>
    <property type="molecule type" value="mRNA"/>
</dbReference>
<dbReference type="SMR" id="Q5MGJ4"/>
<dbReference type="GO" id="GO:0022627">
    <property type="term" value="C:cytosolic small ribosomal subunit"/>
    <property type="evidence" value="ECO:0000250"/>
    <property type="project" value="UniProtKB"/>
</dbReference>
<dbReference type="GO" id="GO:0005840">
    <property type="term" value="C:ribosome"/>
    <property type="evidence" value="ECO:0000250"/>
    <property type="project" value="UniProtKB"/>
</dbReference>
<dbReference type="GO" id="GO:0005791">
    <property type="term" value="C:rough endoplasmic reticulum"/>
    <property type="evidence" value="ECO:0007669"/>
    <property type="project" value="UniProtKB-SubCell"/>
</dbReference>
<dbReference type="GO" id="GO:0003735">
    <property type="term" value="F:structural constituent of ribosome"/>
    <property type="evidence" value="ECO:0007669"/>
    <property type="project" value="InterPro"/>
</dbReference>
<dbReference type="GO" id="GO:0008270">
    <property type="term" value="F:zinc ion binding"/>
    <property type="evidence" value="ECO:0000250"/>
    <property type="project" value="UniProtKB"/>
</dbReference>
<dbReference type="GO" id="GO:0002181">
    <property type="term" value="P:cytoplasmic translation"/>
    <property type="evidence" value="ECO:0000250"/>
    <property type="project" value="UniProtKB"/>
</dbReference>
<dbReference type="FunFam" id="4.10.830.10:FF:000002">
    <property type="entry name" value="40S ribosomal protein S29"/>
    <property type="match status" value="1"/>
</dbReference>
<dbReference type="Gene3D" id="4.10.830.10">
    <property type="entry name" value="30s Ribosomal Protein S14, Chain N"/>
    <property type="match status" value="1"/>
</dbReference>
<dbReference type="InterPro" id="IPR001209">
    <property type="entry name" value="Ribosomal_uS14"/>
</dbReference>
<dbReference type="InterPro" id="IPR018271">
    <property type="entry name" value="Ribosomal_uS14_CS"/>
</dbReference>
<dbReference type="InterPro" id="IPR039744">
    <property type="entry name" value="RIbosomal_uS14_euk_arc"/>
</dbReference>
<dbReference type="InterPro" id="IPR043140">
    <property type="entry name" value="Ribosomal_uS14_sf"/>
</dbReference>
<dbReference type="NCBIfam" id="NF004424">
    <property type="entry name" value="PRK05766.1"/>
    <property type="match status" value="1"/>
</dbReference>
<dbReference type="PANTHER" id="PTHR12010">
    <property type="entry name" value="40S RIBOSOMAL PROTEIN S29"/>
    <property type="match status" value="1"/>
</dbReference>
<dbReference type="PANTHER" id="PTHR12010:SF2">
    <property type="entry name" value="40S RIBOSOMAL PROTEIN S29"/>
    <property type="match status" value="1"/>
</dbReference>
<dbReference type="Pfam" id="PF00253">
    <property type="entry name" value="Ribosomal_S14"/>
    <property type="match status" value="1"/>
</dbReference>
<dbReference type="PROSITE" id="PS00527">
    <property type="entry name" value="RIBOSOMAL_S14"/>
    <property type="match status" value="1"/>
</dbReference>
<reference key="1">
    <citation type="journal article" date="2005" name="Gene">
        <title>A catalog for the transcripts from the venomous structures of the caterpillar Lonomia obliqua: identification of the proteins potentially involved in the coagulation disorder and hemorrhagic syndrome.</title>
        <authorList>
            <person name="Veiga A.B.G."/>
            <person name="Ribeiro J.M.C."/>
            <person name="Guimaraes J.A."/>
            <person name="Francischetti I.M.B."/>
        </authorList>
    </citation>
    <scope>NUCLEOTIDE SEQUENCE [MRNA]</scope>
    <source>
        <tissue>Tegument</tissue>
    </source>
</reference>
<proteinExistence type="inferred from homology"/>
<organism>
    <name type="scientific">Lonomia obliqua</name>
    <name type="common">Moth</name>
    <dbReference type="NCBI Taxonomy" id="304329"/>
    <lineage>
        <taxon>Eukaryota</taxon>
        <taxon>Metazoa</taxon>
        <taxon>Ecdysozoa</taxon>
        <taxon>Arthropoda</taxon>
        <taxon>Hexapoda</taxon>
        <taxon>Insecta</taxon>
        <taxon>Pterygota</taxon>
        <taxon>Neoptera</taxon>
        <taxon>Endopterygota</taxon>
        <taxon>Lepidoptera</taxon>
        <taxon>Glossata</taxon>
        <taxon>Ditrysia</taxon>
        <taxon>Bombycoidea</taxon>
        <taxon>Saturniidae</taxon>
        <taxon>Hemileucinae</taxon>
        <taxon>Lonomia</taxon>
    </lineage>
</organism>
<accession>Q5MGJ4</accession>
<protein>
    <recommendedName>
        <fullName evidence="5">Small ribosomal subunit protein uS14</fullName>
    </recommendedName>
    <alternativeName>
        <fullName>40S ribosomal protein S29</fullName>
    </alternativeName>
</protein>
<evidence type="ECO:0000250" key="1">
    <source>
        <dbReference type="UniProtKB" id="P62273"/>
    </source>
</evidence>
<evidence type="ECO:0000250" key="2">
    <source>
        <dbReference type="UniProtKB" id="Q6QAP6"/>
    </source>
</evidence>
<evidence type="ECO:0000250" key="3">
    <source>
        <dbReference type="UniProtKB" id="Q9VH69"/>
    </source>
</evidence>
<evidence type="ECO:0000255" key="4"/>
<evidence type="ECO:0000305" key="5"/>
<gene>
    <name type="primary">RpS29</name>
</gene>
<feature type="chain" id="PRO_0000268804" description="Small ribosomal subunit protein uS14">
    <location>
        <begin position="1"/>
        <end position="56"/>
    </location>
</feature>
<feature type="binding site" evidence="4">
    <location>
        <position position="21"/>
    </location>
    <ligand>
        <name>Zn(2+)</name>
        <dbReference type="ChEBI" id="CHEBI:29105"/>
    </ligand>
</feature>
<feature type="binding site" evidence="4">
    <location>
        <position position="24"/>
    </location>
    <ligand>
        <name>Zn(2+)</name>
        <dbReference type="ChEBI" id="CHEBI:29105"/>
    </ligand>
</feature>
<feature type="binding site" evidence="4">
    <location>
        <position position="39"/>
    </location>
    <ligand>
        <name>Zn(2+)</name>
        <dbReference type="ChEBI" id="CHEBI:29105"/>
    </ligand>
</feature>
<feature type="binding site" evidence="4">
    <location>
        <position position="42"/>
    </location>
    <ligand>
        <name>Zn(2+)</name>
        <dbReference type="ChEBI" id="CHEBI:29105"/>
    </ligand>
</feature>
<sequence>MGHANIWYSHPRRYCQGSRSCRACSNRHGLIRKYGLNICRQCFREYAHDIGFKKLD</sequence>
<name>RS29_LONON</name>